<feature type="chain" id="PRO_0000298656" description="Uncharacterized protein SAUSA300_1902">
    <location>
        <begin position="1"/>
        <end position="342"/>
    </location>
</feature>
<accession>Q2FFH4</accession>
<gene>
    <name type="ordered locus">SAUSA300_1902</name>
</gene>
<proteinExistence type="inferred from homology"/>
<sequence length="342" mass="38547">MTNGYIGSYTKKNGKGIYRFELNENQSRIDLLETGFELEASTYLVRNNEVLYGINKEGEQCGVASLKIDDNGELHLLNKCLSSKAGTGCYVSISEDKRYLFEAVYGAGIIRMYELNTHTGEIIRLIQELAHDFPTGTHERQDHPHAHYINQTPDGKYVAVTDLGADRIVTYKFDDNGFEFYKESLFKDSDGTRHIEFHDNGKFAYVVHELSNTVSVAEYNDGKFEELERHLTIPENFDGDTKLAAVRLSHDQQFLYVSNRGHDSIAIFKVLDNGQHLELVTITESGGQFPRDFNIASSDDLLVCAHEQGDSVVTVFERNKETGKITLCDNTRVASEGVCVIF</sequence>
<name>Y1902_STAA3</name>
<evidence type="ECO:0000305" key="1"/>
<comment type="similarity">
    <text evidence="1">Belongs to the cycloisomerase 2 family.</text>
</comment>
<reference key="1">
    <citation type="journal article" date="2006" name="Lancet">
        <title>Complete genome sequence of USA300, an epidemic clone of community-acquired meticillin-resistant Staphylococcus aureus.</title>
        <authorList>
            <person name="Diep B.A."/>
            <person name="Gill S.R."/>
            <person name="Chang R.F."/>
            <person name="Phan T.H."/>
            <person name="Chen J.H."/>
            <person name="Davidson M.G."/>
            <person name="Lin F."/>
            <person name="Lin J."/>
            <person name="Carleton H.A."/>
            <person name="Mongodin E.F."/>
            <person name="Sensabaugh G.F."/>
            <person name="Perdreau-Remington F."/>
        </authorList>
    </citation>
    <scope>NUCLEOTIDE SEQUENCE [LARGE SCALE GENOMIC DNA]</scope>
    <source>
        <strain>USA300</strain>
    </source>
</reference>
<dbReference type="EMBL" id="CP000255">
    <property type="protein sequence ID" value="ABD22203.1"/>
    <property type="molecule type" value="Genomic_DNA"/>
</dbReference>
<dbReference type="RefSeq" id="WP_000181322.1">
    <property type="nucleotide sequence ID" value="NZ_CP027476.1"/>
</dbReference>
<dbReference type="SMR" id="Q2FFH4"/>
<dbReference type="KEGG" id="saa:SAUSA300_1902"/>
<dbReference type="HOGENOM" id="CLU_038716_3_0_9"/>
<dbReference type="OMA" id="NKEFIGY"/>
<dbReference type="Proteomes" id="UP000001939">
    <property type="component" value="Chromosome"/>
</dbReference>
<dbReference type="GO" id="GO:0005829">
    <property type="term" value="C:cytosol"/>
    <property type="evidence" value="ECO:0007669"/>
    <property type="project" value="TreeGrafter"/>
</dbReference>
<dbReference type="GO" id="GO:0017057">
    <property type="term" value="F:6-phosphogluconolactonase activity"/>
    <property type="evidence" value="ECO:0007669"/>
    <property type="project" value="TreeGrafter"/>
</dbReference>
<dbReference type="FunFam" id="2.130.10.10:FF:000822">
    <property type="entry name" value="3-carboxy-cis,cis-muconate lactonizing enzyme"/>
    <property type="match status" value="1"/>
</dbReference>
<dbReference type="Gene3D" id="2.130.10.10">
    <property type="entry name" value="YVTN repeat-like/Quinoprotein amine dehydrogenase"/>
    <property type="match status" value="1"/>
</dbReference>
<dbReference type="InterPro" id="IPR050282">
    <property type="entry name" value="Cycloisomerase_2"/>
</dbReference>
<dbReference type="InterPro" id="IPR019405">
    <property type="entry name" value="Lactonase_7-beta_prop"/>
</dbReference>
<dbReference type="InterPro" id="IPR011045">
    <property type="entry name" value="N2O_reductase_N"/>
</dbReference>
<dbReference type="InterPro" id="IPR015943">
    <property type="entry name" value="WD40/YVTN_repeat-like_dom_sf"/>
</dbReference>
<dbReference type="PANTHER" id="PTHR30344:SF1">
    <property type="entry name" value="6-PHOSPHOGLUCONOLACTONASE"/>
    <property type="match status" value="1"/>
</dbReference>
<dbReference type="PANTHER" id="PTHR30344">
    <property type="entry name" value="6-PHOSPHOGLUCONOLACTONASE-RELATED"/>
    <property type="match status" value="1"/>
</dbReference>
<dbReference type="Pfam" id="PF10282">
    <property type="entry name" value="Lactonase"/>
    <property type="match status" value="1"/>
</dbReference>
<dbReference type="SUPFAM" id="SSF50974">
    <property type="entry name" value="Nitrous oxide reductase, N-terminal domain"/>
    <property type="match status" value="1"/>
</dbReference>
<organism>
    <name type="scientific">Staphylococcus aureus (strain USA300)</name>
    <dbReference type="NCBI Taxonomy" id="367830"/>
    <lineage>
        <taxon>Bacteria</taxon>
        <taxon>Bacillati</taxon>
        <taxon>Bacillota</taxon>
        <taxon>Bacilli</taxon>
        <taxon>Bacillales</taxon>
        <taxon>Staphylococcaceae</taxon>
        <taxon>Staphylococcus</taxon>
    </lineage>
</organism>
<protein>
    <recommendedName>
        <fullName>Uncharacterized protein SAUSA300_1902</fullName>
    </recommendedName>
</protein>